<dbReference type="EC" id="6.2.1.5" evidence="1"/>
<dbReference type="EMBL" id="BA000037">
    <property type="protein sequence ID" value="BAC93798.1"/>
    <property type="molecule type" value="Genomic_DNA"/>
</dbReference>
<dbReference type="RefSeq" id="WP_011149793.1">
    <property type="nucleotide sequence ID" value="NC_005139.1"/>
</dbReference>
<dbReference type="SMR" id="Q7MMN3"/>
<dbReference type="STRING" id="672.VV93_v1c09570"/>
<dbReference type="KEGG" id="vvy:VV1034"/>
<dbReference type="PATRIC" id="fig|196600.6.peg.1031"/>
<dbReference type="eggNOG" id="COG0045">
    <property type="taxonomic scope" value="Bacteria"/>
</dbReference>
<dbReference type="HOGENOM" id="CLU_037430_0_2_6"/>
<dbReference type="UniPathway" id="UPA00223">
    <property type="reaction ID" value="UER00999"/>
</dbReference>
<dbReference type="Proteomes" id="UP000002675">
    <property type="component" value="Chromosome I"/>
</dbReference>
<dbReference type="GO" id="GO:0005829">
    <property type="term" value="C:cytosol"/>
    <property type="evidence" value="ECO:0007669"/>
    <property type="project" value="TreeGrafter"/>
</dbReference>
<dbReference type="GO" id="GO:0042709">
    <property type="term" value="C:succinate-CoA ligase complex"/>
    <property type="evidence" value="ECO:0007669"/>
    <property type="project" value="TreeGrafter"/>
</dbReference>
<dbReference type="GO" id="GO:0005524">
    <property type="term" value="F:ATP binding"/>
    <property type="evidence" value="ECO:0007669"/>
    <property type="project" value="UniProtKB-UniRule"/>
</dbReference>
<dbReference type="GO" id="GO:0000287">
    <property type="term" value="F:magnesium ion binding"/>
    <property type="evidence" value="ECO:0007669"/>
    <property type="project" value="UniProtKB-UniRule"/>
</dbReference>
<dbReference type="GO" id="GO:0004775">
    <property type="term" value="F:succinate-CoA ligase (ADP-forming) activity"/>
    <property type="evidence" value="ECO:0007669"/>
    <property type="project" value="UniProtKB-UniRule"/>
</dbReference>
<dbReference type="GO" id="GO:0004776">
    <property type="term" value="F:succinate-CoA ligase (GDP-forming) activity"/>
    <property type="evidence" value="ECO:0007669"/>
    <property type="project" value="RHEA"/>
</dbReference>
<dbReference type="GO" id="GO:0006104">
    <property type="term" value="P:succinyl-CoA metabolic process"/>
    <property type="evidence" value="ECO:0007669"/>
    <property type="project" value="TreeGrafter"/>
</dbReference>
<dbReference type="GO" id="GO:0006099">
    <property type="term" value="P:tricarboxylic acid cycle"/>
    <property type="evidence" value="ECO:0007669"/>
    <property type="project" value="UniProtKB-UniRule"/>
</dbReference>
<dbReference type="FunFam" id="3.30.1490.20:FF:000002">
    <property type="entry name" value="Succinate--CoA ligase [ADP-forming] subunit beta"/>
    <property type="match status" value="1"/>
</dbReference>
<dbReference type="FunFam" id="3.30.470.20:FF:000002">
    <property type="entry name" value="Succinate--CoA ligase [ADP-forming] subunit beta"/>
    <property type="match status" value="1"/>
</dbReference>
<dbReference type="FunFam" id="3.40.50.261:FF:000001">
    <property type="entry name" value="Succinate--CoA ligase [ADP-forming] subunit beta"/>
    <property type="match status" value="1"/>
</dbReference>
<dbReference type="Gene3D" id="3.30.1490.20">
    <property type="entry name" value="ATP-grasp fold, A domain"/>
    <property type="match status" value="1"/>
</dbReference>
<dbReference type="Gene3D" id="3.30.470.20">
    <property type="entry name" value="ATP-grasp fold, B domain"/>
    <property type="match status" value="1"/>
</dbReference>
<dbReference type="Gene3D" id="3.40.50.261">
    <property type="entry name" value="Succinyl-CoA synthetase domains"/>
    <property type="match status" value="1"/>
</dbReference>
<dbReference type="HAMAP" id="MF_00558">
    <property type="entry name" value="Succ_CoA_beta"/>
    <property type="match status" value="1"/>
</dbReference>
<dbReference type="InterPro" id="IPR011761">
    <property type="entry name" value="ATP-grasp"/>
</dbReference>
<dbReference type="InterPro" id="IPR013650">
    <property type="entry name" value="ATP-grasp_succ-CoA_synth-type"/>
</dbReference>
<dbReference type="InterPro" id="IPR013815">
    <property type="entry name" value="ATP_grasp_subdomain_1"/>
</dbReference>
<dbReference type="InterPro" id="IPR017866">
    <property type="entry name" value="Succ-CoA_synthase_bsu_CS"/>
</dbReference>
<dbReference type="InterPro" id="IPR005811">
    <property type="entry name" value="SUCC_ACL_C"/>
</dbReference>
<dbReference type="InterPro" id="IPR005809">
    <property type="entry name" value="Succ_CoA_ligase-like_bsu"/>
</dbReference>
<dbReference type="InterPro" id="IPR016102">
    <property type="entry name" value="Succinyl-CoA_synth-like"/>
</dbReference>
<dbReference type="NCBIfam" id="NF001913">
    <property type="entry name" value="PRK00696.1"/>
    <property type="match status" value="1"/>
</dbReference>
<dbReference type="NCBIfam" id="TIGR01016">
    <property type="entry name" value="sucCoAbeta"/>
    <property type="match status" value="1"/>
</dbReference>
<dbReference type="PANTHER" id="PTHR11815:SF10">
    <property type="entry name" value="SUCCINATE--COA LIGASE [GDP-FORMING] SUBUNIT BETA, MITOCHONDRIAL"/>
    <property type="match status" value="1"/>
</dbReference>
<dbReference type="PANTHER" id="PTHR11815">
    <property type="entry name" value="SUCCINYL-COA SYNTHETASE BETA CHAIN"/>
    <property type="match status" value="1"/>
</dbReference>
<dbReference type="Pfam" id="PF08442">
    <property type="entry name" value="ATP-grasp_2"/>
    <property type="match status" value="1"/>
</dbReference>
<dbReference type="Pfam" id="PF00549">
    <property type="entry name" value="Ligase_CoA"/>
    <property type="match status" value="1"/>
</dbReference>
<dbReference type="PIRSF" id="PIRSF001554">
    <property type="entry name" value="SucCS_beta"/>
    <property type="match status" value="1"/>
</dbReference>
<dbReference type="SUPFAM" id="SSF56059">
    <property type="entry name" value="Glutathione synthetase ATP-binding domain-like"/>
    <property type="match status" value="1"/>
</dbReference>
<dbReference type="SUPFAM" id="SSF52210">
    <property type="entry name" value="Succinyl-CoA synthetase domains"/>
    <property type="match status" value="1"/>
</dbReference>
<dbReference type="PROSITE" id="PS50975">
    <property type="entry name" value="ATP_GRASP"/>
    <property type="match status" value="1"/>
</dbReference>
<dbReference type="PROSITE" id="PS01217">
    <property type="entry name" value="SUCCINYL_COA_LIG_3"/>
    <property type="match status" value="1"/>
</dbReference>
<sequence length="388" mass="41539">MNLHEYQAKQLFAEFGLPIPEGYACDTPQEAFEAAGRISTAKKVVKCQVHAGGRGKAGGVELHDTKEGVKEFAQKWLGKNLVTYQTDANGQPVTKILVEEASNIANELYLGAVVDRATRKVVFMASTEGGVEIEKVAEETPELIHKAAIDPLVGPQAYQGRELAFKLGLQGDQIKQFVKIFMGLGEMFTQYDLALLEINPLVITGEGNLLCLDGKINIDSNALYRQPKLREMHDPSQEDKREAHAAQWELNYVALDGNVGCMVNGAGLAMGTMDIVNLHGGKPANFLDVGGGATKERVAEAFKIILSDDNVKAVLVNIFGGIVRCDMIAEGIIGAVKEVGVSVPVVVRLEGTNADLGRKVLAESGLDIIAAESLTDAAQKVVAAAEGK</sequence>
<reference key="1">
    <citation type="journal article" date="2003" name="Genome Res.">
        <title>Comparative genome analysis of Vibrio vulnificus, a marine pathogen.</title>
        <authorList>
            <person name="Chen C.-Y."/>
            <person name="Wu K.-M."/>
            <person name="Chang Y.-C."/>
            <person name="Chang C.-H."/>
            <person name="Tsai H.-C."/>
            <person name="Liao T.-L."/>
            <person name="Liu Y.-M."/>
            <person name="Chen H.-J."/>
            <person name="Shen A.B.-T."/>
            <person name="Li J.-C."/>
            <person name="Su T.-L."/>
            <person name="Shao C.-P."/>
            <person name="Lee C.-T."/>
            <person name="Hor L.-I."/>
            <person name="Tsai S.-F."/>
        </authorList>
    </citation>
    <scope>NUCLEOTIDE SEQUENCE [LARGE SCALE GENOMIC DNA]</scope>
    <source>
        <strain>YJ016</strain>
    </source>
</reference>
<gene>
    <name evidence="1" type="primary">sucC</name>
    <name type="ordered locus">VV1034</name>
</gene>
<feature type="chain" id="PRO_0000102875" description="Succinate--CoA ligase [ADP-forming] subunit beta">
    <location>
        <begin position="1"/>
        <end position="388"/>
    </location>
</feature>
<feature type="domain" description="ATP-grasp" evidence="1">
    <location>
        <begin position="9"/>
        <end position="244"/>
    </location>
</feature>
<feature type="binding site" evidence="1">
    <location>
        <position position="46"/>
    </location>
    <ligand>
        <name>ATP</name>
        <dbReference type="ChEBI" id="CHEBI:30616"/>
    </ligand>
</feature>
<feature type="binding site" evidence="1">
    <location>
        <begin position="53"/>
        <end position="55"/>
    </location>
    <ligand>
        <name>ATP</name>
        <dbReference type="ChEBI" id="CHEBI:30616"/>
    </ligand>
</feature>
<feature type="binding site" evidence="1">
    <location>
        <position position="99"/>
    </location>
    <ligand>
        <name>ATP</name>
        <dbReference type="ChEBI" id="CHEBI:30616"/>
    </ligand>
</feature>
<feature type="binding site" evidence="1">
    <location>
        <position position="102"/>
    </location>
    <ligand>
        <name>ATP</name>
        <dbReference type="ChEBI" id="CHEBI:30616"/>
    </ligand>
</feature>
<feature type="binding site" evidence="1">
    <location>
        <position position="107"/>
    </location>
    <ligand>
        <name>ATP</name>
        <dbReference type="ChEBI" id="CHEBI:30616"/>
    </ligand>
</feature>
<feature type="binding site" evidence="1">
    <location>
        <position position="199"/>
    </location>
    <ligand>
        <name>Mg(2+)</name>
        <dbReference type="ChEBI" id="CHEBI:18420"/>
    </ligand>
</feature>
<feature type="binding site" evidence="1">
    <location>
        <position position="213"/>
    </location>
    <ligand>
        <name>Mg(2+)</name>
        <dbReference type="ChEBI" id="CHEBI:18420"/>
    </ligand>
</feature>
<feature type="binding site" evidence="1">
    <location>
        <position position="264"/>
    </location>
    <ligand>
        <name>substrate</name>
        <note>ligand shared with subunit alpha</note>
    </ligand>
</feature>
<feature type="binding site" evidence="1">
    <location>
        <begin position="321"/>
        <end position="323"/>
    </location>
    <ligand>
        <name>substrate</name>
        <note>ligand shared with subunit alpha</note>
    </ligand>
</feature>
<evidence type="ECO:0000255" key="1">
    <source>
        <dbReference type="HAMAP-Rule" id="MF_00558"/>
    </source>
</evidence>
<name>SUCC_VIBVY</name>
<proteinExistence type="inferred from homology"/>
<keyword id="KW-0067">ATP-binding</keyword>
<keyword id="KW-0436">Ligase</keyword>
<keyword id="KW-0460">Magnesium</keyword>
<keyword id="KW-0479">Metal-binding</keyword>
<keyword id="KW-0547">Nucleotide-binding</keyword>
<keyword id="KW-0816">Tricarboxylic acid cycle</keyword>
<accession>Q7MMN3</accession>
<protein>
    <recommendedName>
        <fullName evidence="1">Succinate--CoA ligase [ADP-forming] subunit beta</fullName>
        <ecNumber evidence="1">6.2.1.5</ecNumber>
    </recommendedName>
    <alternativeName>
        <fullName evidence="1">Succinyl-CoA synthetase subunit beta</fullName>
        <shortName evidence="1">SCS-beta</shortName>
    </alternativeName>
</protein>
<organism>
    <name type="scientific">Vibrio vulnificus (strain YJ016)</name>
    <dbReference type="NCBI Taxonomy" id="196600"/>
    <lineage>
        <taxon>Bacteria</taxon>
        <taxon>Pseudomonadati</taxon>
        <taxon>Pseudomonadota</taxon>
        <taxon>Gammaproteobacteria</taxon>
        <taxon>Vibrionales</taxon>
        <taxon>Vibrionaceae</taxon>
        <taxon>Vibrio</taxon>
    </lineage>
</organism>
<comment type="function">
    <text evidence="1">Succinyl-CoA synthetase functions in the citric acid cycle (TCA), coupling the hydrolysis of succinyl-CoA to the synthesis of either ATP or GTP and thus represents the only step of substrate-level phosphorylation in the TCA. The beta subunit provides nucleotide specificity of the enzyme and binds the substrate succinate, while the binding sites for coenzyme A and phosphate are found in the alpha subunit.</text>
</comment>
<comment type="catalytic activity">
    <reaction evidence="1">
        <text>succinate + ATP + CoA = succinyl-CoA + ADP + phosphate</text>
        <dbReference type="Rhea" id="RHEA:17661"/>
        <dbReference type="ChEBI" id="CHEBI:30031"/>
        <dbReference type="ChEBI" id="CHEBI:30616"/>
        <dbReference type="ChEBI" id="CHEBI:43474"/>
        <dbReference type="ChEBI" id="CHEBI:57287"/>
        <dbReference type="ChEBI" id="CHEBI:57292"/>
        <dbReference type="ChEBI" id="CHEBI:456216"/>
        <dbReference type="EC" id="6.2.1.5"/>
    </reaction>
    <physiologicalReaction direction="right-to-left" evidence="1">
        <dbReference type="Rhea" id="RHEA:17663"/>
    </physiologicalReaction>
</comment>
<comment type="catalytic activity">
    <reaction evidence="1">
        <text>GTP + succinate + CoA = succinyl-CoA + GDP + phosphate</text>
        <dbReference type="Rhea" id="RHEA:22120"/>
        <dbReference type="ChEBI" id="CHEBI:30031"/>
        <dbReference type="ChEBI" id="CHEBI:37565"/>
        <dbReference type="ChEBI" id="CHEBI:43474"/>
        <dbReference type="ChEBI" id="CHEBI:57287"/>
        <dbReference type="ChEBI" id="CHEBI:57292"/>
        <dbReference type="ChEBI" id="CHEBI:58189"/>
    </reaction>
    <physiologicalReaction direction="right-to-left" evidence="1">
        <dbReference type="Rhea" id="RHEA:22122"/>
    </physiologicalReaction>
</comment>
<comment type="cofactor">
    <cofactor evidence="1">
        <name>Mg(2+)</name>
        <dbReference type="ChEBI" id="CHEBI:18420"/>
    </cofactor>
    <text evidence="1">Binds 1 Mg(2+) ion per subunit.</text>
</comment>
<comment type="pathway">
    <text evidence="1">Carbohydrate metabolism; tricarboxylic acid cycle; succinate from succinyl-CoA (ligase route): step 1/1.</text>
</comment>
<comment type="subunit">
    <text evidence="1">Heterotetramer of two alpha and two beta subunits.</text>
</comment>
<comment type="similarity">
    <text evidence="1">Belongs to the succinate/malate CoA ligase beta subunit family.</text>
</comment>